<name>TAL_PARXL</name>
<feature type="chain" id="PRO_1000014496" description="Transaldolase">
    <location>
        <begin position="1"/>
        <end position="317"/>
    </location>
</feature>
<feature type="active site" description="Schiff-base intermediate with substrate" evidence="2">
    <location>
        <position position="126"/>
    </location>
</feature>
<reference key="1">
    <citation type="journal article" date="2006" name="Proc. Natl. Acad. Sci. U.S.A.">
        <title>Burkholderia xenovorans LB400 harbors a multi-replicon, 9.73-Mbp genome shaped for versatility.</title>
        <authorList>
            <person name="Chain P.S.G."/>
            <person name="Denef V.J."/>
            <person name="Konstantinidis K.T."/>
            <person name="Vergez L.M."/>
            <person name="Agullo L."/>
            <person name="Reyes V.L."/>
            <person name="Hauser L."/>
            <person name="Cordova M."/>
            <person name="Gomez L."/>
            <person name="Gonzalez M."/>
            <person name="Land M."/>
            <person name="Lao V."/>
            <person name="Larimer F."/>
            <person name="LiPuma J.J."/>
            <person name="Mahenthiralingam E."/>
            <person name="Malfatti S.A."/>
            <person name="Marx C.J."/>
            <person name="Parnell J.J."/>
            <person name="Ramette A."/>
            <person name="Richardson P."/>
            <person name="Seeger M."/>
            <person name="Smith D."/>
            <person name="Spilker T."/>
            <person name="Sul W.J."/>
            <person name="Tsoi T.V."/>
            <person name="Ulrich L.E."/>
            <person name="Zhulin I.B."/>
            <person name="Tiedje J.M."/>
        </authorList>
    </citation>
    <scope>NUCLEOTIDE SEQUENCE [LARGE SCALE GENOMIC DNA]</scope>
    <source>
        <strain>LB400</strain>
    </source>
</reference>
<accession>Q142S4</accession>
<gene>
    <name evidence="2" type="primary">tal</name>
    <name type="ordered locus">Bxeno_A1127</name>
    <name type="ORF">Bxe_A3318</name>
</gene>
<dbReference type="EC" id="2.2.1.2" evidence="2"/>
<dbReference type="EMBL" id="CP000270">
    <property type="protein sequence ID" value="ABE29665.1"/>
    <property type="molecule type" value="Genomic_DNA"/>
</dbReference>
<dbReference type="RefSeq" id="WP_011487399.1">
    <property type="nucleotide sequence ID" value="NC_007951.1"/>
</dbReference>
<dbReference type="SMR" id="Q142S4"/>
<dbReference type="STRING" id="266265.Bxe_A3318"/>
<dbReference type="KEGG" id="bxb:DR64_1018"/>
<dbReference type="KEGG" id="bxe:Bxe_A3318"/>
<dbReference type="PATRIC" id="fig|266265.5.peg.1160"/>
<dbReference type="eggNOG" id="COG0176">
    <property type="taxonomic scope" value="Bacteria"/>
</dbReference>
<dbReference type="OrthoDB" id="9809101at2"/>
<dbReference type="UniPathway" id="UPA00115">
    <property type="reaction ID" value="UER00414"/>
</dbReference>
<dbReference type="Proteomes" id="UP000001817">
    <property type="component" value="Chromosome 1"/>
</dbReference>
<dbReference type="GO" id="GO:0005737">
    <property type="term" value="C:cytoplasm"/>
    <property type="evidence" value="ECO:0007669"/>
    <property type="project" value="UniProtKB-SubCell"/>
</dbReference>
<dbReference type="GO" id="GO:0004801">
    <property type="term" value="F:transaldolase activity"/>
    <property type="evidence" value="ECO:0000250"/>
    <property type="project" value="UniProtKB"/>
</dbReference>
<dbReference type="GO" id="GO:0005975">
    <property type="term" value="P:carbohydrate metabolic process"/>
    <property type="evidence" value="ECO:0007669"/>
    <property type="project" value="InterPro"/>
</dbReference>
<dbReference type="GO" id="GO:0009052">
    <property type="term" value="P:pentose-phosphate shunt, non-oxidative branch"/>
    <property type="evidence" value="ECO:0007669"/>
    <property type="project" value="TreeGrafter"/>
</dbReference>
<dbReference type="CDD" id="cd00957">
    <property type="entry name" value="Transaldolase_TalAB"/>
    <property type="match status" value="1"/>
</dbReference>
<dbReference type="FunFam" id="3.20.20.70:FF:000002">
    <property type="entry name" value="Transaldolase"/>
    <property type="match status" value="1"/>
</dbReference>
<dbReference type="Gene3D" id="3.20.20.70">
    <property type="entry name" value="Aldolase class I"/>
    <property type="match status" value="1"/>
</dbReference>
<dbReference type="HAMAP" id="MF_00492">
    <property type="entry name" value="Transaldolase_1"/>
    <property type="match status" value="1"/>
</dbReference>
<dbReference type="InterPro" id="IPR013785">
    <property type="entry name" value="Aldolase_TIM"/>
</dbReference>
<dbReference type="InterPro" id="IPR001585">
    <property type="entry name" value="TAL/FSA"/>
</dbReference>
<dbReference type="InterPro" id="IPR004730">
    <property type="entry name" value="Transaldolase_1"/>
</dbReference>
<dbReference type="InterPro" id="IPR018225">
    <property type="entry name" value="Transaldolase_AS"/>
</dbReference>
<dbReference type="NCBIfam" id="NF009001">
    <property type="entry name" value="PRK12346.1"/>
    <property type="match status" value="1"/>
</dbReference>
<dbReference type="NCBIfam" id="TIGR00874">
    <property type="entry name" value="talAB"/>
    <property type="match status" value="1"/>
</dbReference>
<dbReference type="PANTHER" id="PTHR10683">
    <property type="entry name" value="TRANSALDOLASE"/>
    <property type="match status" value="1"/>
</dbReference>
<dbReference type="PANTHER" id="PTHR10683:SF18">
    <property type="entry name" value="TRANSALDOLASE"/>
    <property type="match status" value="1"/>
</dbReference>
<dbReference type="Pfam" id="PF00923">
    <property type="entry name" value="TAL_FSA"/>
    <property type="match status" value="1"/>
</dbReference>
<dbReference type="SUPFAM" id="SSF51569">
    <property type="entry name" value="Aldolase"/>
    <property type="match status" value="1"/>
</dbReference>
<dbReference type="PROSITE" id="PS01054">
    <property type="entry name" value="TRANSALDOLASE_1"/>
    <property type="match status" value="1"/>
</dbReference>
<dbReference type="PROSITE" id="PS00958">
    <property type="entry name" value="TRANSALDOLASE_2"/>
    <property type="match status" value="1"/>
</dbReference>
<organism>
    <name type="scientific">Paraburkholderia xenovorans (strain LB400)</name>
    <dbReference type="NCBI Taxonomy" id="266265"/>
    <lineage>
        <taxon>Bacteria</taxon>
        <taxon>Pseudomonadati</taxon>
        <taxon>Pseudomonadota</taxon>
        <taxon>Betaproteobacteria</taxon>
        <taxon>Burkholderiales</taxon>
        <taxon>Burkholderiaceae</taxon>
        <taxon>Paraburkholderia</taxon>
    </lineage>
</organism>
<sequence length="317" mass="34908">MTTALDQLKQYTTVVADTGDFQQLAQYKPQDATTNPSLILKAVQKDDYKPLLEKTVKAHASKPVGAIIDQLLIAFGTEILKIIPGRVSTEVDARLSFDTEGSIAKGRELIALYKEHGIGRERVLIKLASTWEGIRAAEVLQKEGIHCNMTLLFSLAQAAACAEAGAQLISPFVGRIYDWYKKNAGSAWDEAKDGGANDPGVKSVRRIYAYYKKFGYKTEVMGASFRTPGQILELAGCDLLTISPDLLQKLHESTEKVERKLSPDIAKESDIERVPVDESSFRFLVNDEAMATEKLAEGIRAFAADAIKLEKLIDALR</sequence>
<evidence type="ECO:0000250" key="1"/>
<evidence type="ECO:0000255" key="2">
    <source>
        <dbReference type="HAMAP-Rule" id="MF_00492"/>
    </source>
</evidence>
<proteinExistence type="inferred from homology"/>
<keyword id="KW-0963">Cytoplasm</keyword>
<keyword id="KW-0570">Pentose shunt</keyword>
<keyword id="KW-1185">Reference proteome</keyword>
<keyword id="KW-0704">Schiff base</keyword>
<keyword id="KW-0808">Transferase</keyword>
<comment type="function">
    <text evidence="2">Transaldolase is important for the balance of metabolites in the pentose-phosphate pathway.</text>
</comment>
<comment type="catalytic activity">
    <reaction evidence="2">
        <text>D-sedoheptulose 7-phosphate + D-glyceraldehyde 3-phosphate = D-erythrose 4-phosphate + beta-D-fructose 6-phosphate</text>
        <dbReference type="Rhea" id="RHEA:17053"/>
        <dbReference type="ChEBI" id="CHEBI:16897"/>
        <dbReference type="ChEBI" id="CHEBI:57483"/>
        <dbReference type="ChEBI" id="CHEBI:57634"/>
        <dbReference type="ChEBI" id="CHEBI:59776"/>
        <dbReference type="EC" id="2.2.1.2"/>
    </reaction>
</comment>
<comment type="pathway">
    <text evidence="2">Carbohydrate degradation; pentose phosphate pathway; D-glyceraldehyde 3-phosphate and beta-D-fructose 6-phosphate from D-ribose 5-phosphate and D-xylulose 5-phosphate (non-oxidative stage): step 2/3.</text>
</comment>
<comment type="subunit">
    <text evidence="1">Homodimer.</text>
</comment>
<comment type="subcellular location">
    <subcellularLocation>
        <location evidence="2">Cytoplasm</location>
    </subcellularLocation>
</comment>
<comment type="similarity">
    <text evidence="2">Belongs to the transaldolase family. Type 1 subfamily.</text>
</comment>
<protein>
    <recommendedName>
        <fullName evidence="2">Transaldolase</fullName>
        <ecNumber evidence="2">2.2.1.2</ecNumber>
    </recommendedName>
</protein>